<dbReference type="EC" id="1.11.1.7"/>
<dbReference type="GO" id="GO:0005576">
    <property type="term" value="C:extracellular region"/>
    <property type="evidence" value="ECO:0007669"/>
    <property type="project" value="UniProtKB-SubCell"/>
</dbReference>
<dbReference type="GO" id="GO:0020037">
    <property type="term" value="F:heme binding"/>
    <property type="evidence" value="ECO:0007669"/>
    <property type="project" value="InterPro"/>
</dbReference>
<dbReference type="GO" id="GO:0140825">
    <property type="term" value="F:lactoperoxidase activity"/>
    <property type="evidence" value="ECO:0007669"/>
    <property type="project" value="UniProtKB-EC"/>
</dbReference>
<dbReference type="GO" id="GO:0046872">
    <property type="term" value="F:metal ion binding"/>
    <property type="evidence" value="ECO:0007669"/>
    <property type="project" value="UniProtKB-KW"/>
</dbReference>
<dbReference type="GO" id="GO:0042744">
    <property type="term" value="P:hydrogen peroxide catabolic process"/>
    <property type="evidence" value="ECO:0007669"/>
    <property type="project" value="UniProtKB-KW"/>
</dbReference>
<dbReference type="GO" id="GO:0006979">
    <property type="term" value="P:response to oxidative stress"/>
    <property type="evidence" value="ECO:0007669"/>
    <property type="project" value="InterPro"/>
</dbReference>
<dbReference type="Gene3D" id="1.10.420.10">
    <property type="entry name" value="Peroxidase, domain 2"/>
    <property type="match status" value="1"/>
</dbReference>
<dbReference type="InterPro" id="IPR010255">
    <property type="entry name" value="Haem_peroxidase_sf"/>
</dbReference>
<dbReference type="InterPro" id="IPR019793">
    <property type="entry name" value="Peroxidases_heam-ligand_BS"/>
</dbReference>
<dbReference type="SUPFAM" id="SSF48113">
    <property type="entry name" value="Heme-dependent peroxidases"/>
    <property type="match status" value="1"/>
</dbReference>
<dbReference type="PROSITE" id="PS00435">
    <property type="entry name" value="PEROXIDASE_1"/>
    <property type="match status" value="1"/>
</dbReference>
<organism>
    <name type="scientific">Ginkgo biloba</name>
    <name type="common">Ginkgo</name>
    <name type="synonym">Maidenhair tree</name>
    <dbReference type="NCBI Taxonomy" id="3311"/>
    <lineage>
        <taxon>Eukaryota</taxon>
        <taxon>Viridiplantae</taxon>
        <taxon>Streptophyta</taxon>
        <taxon>Embryophyta</taxon>
        <taxon>Tracheophyta</taxon>
        <taxon>Spermatophyta</taxon>
        <taxon>Ginkgoidae</taxon>
        <taxon>Ginkgoales</taxon>
        <taxon>Ginkgoaceae</taxon>
        <taxon>Ginkgo</taxon>
    </lineage>
</organism>
<accession>P85317</accession>
<sequence length="89" mass="9406">LSPTFYATSXPNVXXTRDSVVEIGQLADTVAPVRGFDVIDNIKDMVALSGSHTIGQARQATRSPAQVDLSNTRGLLGQAGNDFALVDDK</sequence>
<name>PER_GINBI</name>
<keyword id="KW-0106">Calcium</keyword>
<keyword id="KW-0903">Direct protein sequencing</keyword>
<keyword id="KW-0349">Heme</keyword>
<keyword id="KW-0376">Hydrogen peroxide</keyword>
<keyword id="KW-0408">Iron</keyword>
<keyword id="KW-0479">Metal-binding</keyword>
<keyword id="KW-0560">Oxidoreductase</keyword>
<keyword id="KW-0575">Peroxidase</keyword>
<keyword id="KW-0964">Secreted</keyword>
<feature type="chain" id="PRO_0000312874" description="Peroxidase">
    <location>
        <begin position="1"/>
        <end position="89" status="greater than"/>
    </location>
</feature>
<feature type="binding site" description="axial binding residue" evidence="2 3">
    <location>
        <position position="52"/>
    </location>
    <ligand>
        <name>heme</name>
        <dbReference type="ChEBI" id="CHEBI:30413"/>
    </ligand>
    <ligandPart>
        <name>Fe</name>
        <dbReference type="ChEBI" id="CHEBI:18248"/>
    </ligandPart>
</feature>
<feature type="binding site" evidence="2 3">
    <location>
        <position position="53"/>
    </location>
    <ligand>
        <name>Ca(2+)</name>
        <dbReference type="ChEBI" id="CHEBI:29108"/>
        <label>2</label>
    </ligand>
</feature>
<feature type="binding site" evidence="2 3">
    <location>
        <position position="68"/>
    </location>
    <ligand>
        <name>Ca(2+)</name>
        <dbReference type="ChEBI" id="CHEBI:29108"/>
        <label>2</label>
    </ligand>
</feature>
<feature type="unsure residue" description="Q or K">
    <location>
        <position position="59"/>
    </location>
</feature>
<feature type="unsure residue" description="Q or K">
    <location>
        <position position="66"/>
    </location>
</feature>
<feature type="unsure residue" description="L or I">
    <location>
        <position position="69"/>
    </location>
</feature>
<feature type="unsure residue" description="L or I">
    <location>
        <position position="75"/>
    </location>
</feature>
<feature type="unsure residue" description="L or I">
    <location>
        <position position="76"/>
    </location>
</feature>
<feature type="unsure residue" description="Q or K">
    <location>
        <position position="78"/>
    </location>
</feature>
<feature type="unsure residue" description="F or M">
    <location>
        <position position="83"/>
    </location>
</feature>
<feature type="unsure residue" description="L or I">
    <location>
        <position position="85"/>
    </location>
</feature>
<feature type="non-consecutive residues" evidence="5">
    <location>
        <begin position="17"/>
        <end position="18"/>
    </location>
</feature>
<feature type="non-consecutive residues" evidence="5">
    <location>
        <begin position="34"/>
        <end position="35"/>
    </location>
</feature>
<feature type="non-consecutive residues" evidence="5">
    <location>
        <begin position="43"/>
        <end position="44"/>
    </location>
</feature>
<feature type="non-consecutive residues" evidence="5">
    <location>
        <begin position="58"/>
        <end position="59"/>
    </location>
</feature>
<feature type="non-consecutive residues" evidence="5">
    <location>
        <begin position="62"/>
        <end position="63"/>
    </location>
</feature>
<feature type="non-consecutive residues" evidence="5">
    <location>
        <begin position="73"/>
        <end position="74"/>
    </location>
</feature>
<feature type="non-consecutive residues" evidence="5">
    <location>
        <begin position="80"/>
        <end position="81"/>
    </location>
</feature>
<feature type="non-consecutive residues" evidence="5">
    <location>
        <begin position="84"/>
        <end position="85"/>
    </location>
</feature>
<feature type="non-terminal residue">
    <location>
        <position position="89"/>
    </location>
</feature>
<proteinExistence type="evidence at protein level"/>
<protein>
    <recommendedName>
        <fullName>Peroxidase</fullName>
        <ecNumber>1.11.1.7</ecNumber>
    </recommendedName>
</protein>
<evidence type="ECO:0000250" key="1">
    <source>
        <dbReference type="UniProtKB" id="P84516"/>
    </source>
</evidence>
<evidence type="ECO:0000250" key="2">
    <source>
        <dbReference type="UniProtKB" id="Q39034"/>
    </source>
</evidence>
<evidence type="ECO:0000255" key="3">
    <source>
        <dbReference type="PROSITE-ProRule" id="PRU00297"/>
    </source>
</evidence>
<evidence type="ECO:0000269" key="4">
    <source>
    </source>
</evidence>
<evidence type="ECO:0000305" key="5"/>
<reference key="1">
    <citation type="journal article" date="2009" name="Physiol. Plantarum">
        <title>The presence of sinapyl lignin in Ginkgo biloba cell cultures changes our views of the evolution of lignin biosynthesis.</title>
        <authorList>
            <person name="Novo Uzal E."/>
            <person name="Gomez Ros L.V."/>
            <person name="Pomar F."/>
            <person name="Bernal M.A."/>
            <person name="Paradela A."/>
            <person name="Albar J.P."/>
            <person name="Ros Barcelo A."/>
        </authorList>
    </citation>
    <scope>PROTEIN SEQUENCE</scope>
    <scope>FUNCTION</scope>
    <scope>CATALYTIC ACTIVITY</scope>
    <scope>MASS SPECTROMETRY</scope>
    <source>
        <strain>PC-650</strain>
        <tissue>Callus</tissue>
    </source>
</reference>
<comment type="function">
    <text evidence="3 4">Removal of H(2)O(2), oxidation of toxic reductants, biosynthesis and degradation of lignin, suberization, auxin catabolism, response to environmental stresses such as wounding, pathogen attack and oxidative stress. These functions might be dependent on each isozyme/isoform in each plant tissue. Active against p-coumaryl alcohol, coniferyl alcohol and coniferyl aldehyde.</text>
</comment>
<comment type="catalytic activity">
    <reaction evidence="4">
        <text>2 a phenolic donor + H2O2 = 2 a phenolic radical donor + 2 H2O</text>
        <dbReference type="Rhea" id="RHEA:56136"/>
        <dbReference type="ChEBI" id="CHEBI:15377"/>
        <dbReference type="ChEBI" id="CHEBI:16240"/>
        <dbReference type="ChEBI" id="CHEBI:139520"/>
        <dbReference type="ChEBI" id="CHEBI:139521"/>
        <dbReference type="EC" id="1.11.1.7"/>
    </reaction>
</comment>
<comment type="cofactor">
    <cofactor evidence="2 3">
        <name>heme b</name>
        <dbReference type="ChEBI" id="CHEBI:60344"/>
    </cofactor>
    <text evidence="2 3">Binds 1 heme b (iron(II)-protoporphyrin IX) group per subunit.</text>
</comment>
<comment type="cofactor">
    <cofactor evidence="2 3">
        <name>Ca(2+)</name>
        <dbReference type="ChEBI" id="CHEBI:29108"/>
    </cofactor>
    <text evidence="2 3">Binds 2 calcium ions per subunit.</text>
</comment>
<comment type="subcellular location">
    <subcellularLocation>
        <location evidence="1 3">Secreted</location>
    </subcellularLocation>
</comment>
<comment type="mass spectrometry" mass="32499.0" method="MALDI" evidence="4"/>
<comment type="mass spectrometry" mass="32818.0" method="SELDI" evidence="4"/>
<comment type="similarity">
    <text evidence="3">Belongs to the peroxidase family. Classical plant (class III) peroxidase subfamily.</text>
</comment>
<comment type="caution">
    <text evidence="5">The order of the peptides shown is unknown.</text>
</comment>